<evidence type="ECO:0000250" key="1"/>
<evidence type="ECO:0000255" key="2">
    <source>
        <dbReference type="HAMAP-Rule" id="MF_01317"/>
    </source>
</evidence>
<organism>
    <name type="scientific">Beta vulgaris</name>
    <name type="common">Sugar beet</name>
    <dbReference type="NCBI Taxonomy" id="161934"/>
    <lineage>
        <taxon>Eukaryota</taxon>
        <taxon>Viridiplantae</taxon>
        <taxon>Streptophyta</taxon>
        <taxon>Embryophyta</taxon>
        <taxon>Tracheophyta</taxon>
        <taxon>Spermatophyta</taxon>
        <taxon>Magnoliopsida</taxon>
        <taxon>eudicotyledons</taxon>
        <taxon>Gunneridae</taxon>
        <taxon>Pentapetalae</taxon>
        <taxon>Caryophyllales</taxon>
        <taxon>Chenopodiaceae</taxon>
        <taxon>Betoideae</taxon>
        <taxon>Beta</taxon>
    </lineage>
</organism>
<geneLocation type="chloroplast"/>
<accession>P60141</accession>
<accession>O47030</accession>
<accession>P12166</accession>
<accession>P12167</accession>
<accession>Q34007</accession>
<dbReference type="EMBL" id="D38019">
    <property type="protein sequence ID" value="BAA07220.1"/>
    <property type="molecule type" value="Genomic_DNA"/>
</dbReference>
<dbReference type="SMR" id="P60141"/>
<dbReference type="GO" id="GO:0009535">
    <property type="term" value="C:chloroplast thylakoid membrane"/>
    <property type="evidence" value="ECO:0007669"/>
    <property type="project" value="UniProtKB-SubCell"/>
</dbReference>
<dbReference type="GO" id="GO:0009539">
    <property type="term" value="C:photosystem II reaction center"/>
    <property type="evidence" value="ECO:0007669"/>
    <property type="project" value="InterPro"/>
</dbReference>
<dbReference type="GO" id="GO:0015979">
    <property type="term" value="P:photosynthesis"/>
    <property type="evidence" value="ECO:0007669"/>
    <property type="project" value="UniProtKB-UniRule"/>
</dbReference>
<dbReference type="HAMAP" id="MF_01317">
    <property type="entry name" value="PSII_PsbL"/>
    <property type="match status" value="1"/>
</dbReference>
<dbReference type="InterPro" id="IPR003372">
    <property type="entry name" value="PSII_PsbL"/>
</dbReference>
<dbReference type="InterPro" id="IPR037266">
    <property type="entry name" value="PSII_PsbL_sf"/>
</dbReference>
<dbReference type="NCBIfam" id="NF001972">
    <property type="entry name" value="PRK00753.1"/>
    <property type="match status" value="1"/>
</dbReference>
<dbReference type="Pfam" id="PF02419">
    <property type="entry name" value="PsbL"/>
    <property type="match status" value="1"/>
</dbReference>
<dbReference type="SUPFAM" id="SSF161017">
    <property type="entry name" value="Photosystem II reaction center protein L, PsbL"/>
    <property type="match status" value="1"/>
</dbReference>
<keyword id="KW-0150">Chloroplast</keyword>
<keyword id="KW-0472">Membrane</keyword>
<keyword id="KW-0602">Photosynthesis</keyword>
<keyword id="KW-0604">Photosystem II</keyword>
<keyword id="KW-0934">Plastid</keyword>
<keyword id="KW-0674">Reaction center</keyword>
<keyword id="KW-0691">RNA editing</keyword>
<keyword id="KW-0793">Thylakoid</keyword>
<keyword id="KW-0812">Transmembrane</keyword>
<keyword id="KW-1133">Transmembrane helix</keyword>
<reference key="1">
    <citation type="journal article" date="1995" name="Curr. Genet.">
        <title>The chloroplast trnP-trnW-petG gene cluster in the mitochondrial genomes of Beta vulgaris, B. trigyna and B. webbiana: evolutionary aspects.</title>
        <authorList>
            <person name="Kubo T."/>
            <person name="Yanai Y."/>
            <person name="Kinoshita T."/>
            <person name="Mikami T."/>
        </authorList>
    </citation>
    <scope>NUCLEOTIDE SEQUENCE [GENOMIC DNA]</scope>
    <source>
        <strain>cv. TK81-O</strain>
        <tissue>Leaf</tissue>
    </source>
</reference>
<gene>
    <name evidence="2" type="primary">psbL</name>
</gene>
<comment type="function">
    <text evidence="2">One of the components of the core complex of photosystem II (PSII). PSII is a light-driven water:plastoquinone oxidoreductase that uses light energy to abstract electrons from H(2)O, generating O(2) and a proton gradient subsequently used for ATP formation. It consists of a core antenna complex that captures photons, and an electron transfer chain that converts photonic excitation into a charge separation. This subunit is found at the monomer-monomer interface and is required for correct PSII assembly and/or dimerization.</text>
</comment>
<comment type="subunit">
    <text evidence="2">PSII is composed of 1 copy each of membrane proteins PsbA, PsbB, PsbC, PsbD, PsbE, PsbF, PsbH, PsbI, PsbJ, PsbK, PsbL, PsbM, PsbT, PsbX, PsbY, PsbZ, Psb30/Ycf12, at least 3 peripheral proteins of the oxygen-evolving complex and a large number of cofactors. It forms dimeric complexes.</text>
</comment>
<comment type="subcellular location">
    <subcellularLocation>
        <location evidence="2">Plastid</location>
        <location evidence="2">Chloroplast thylakoid membrane</location>
        <topology evidence="2">Single-pass membrane protein</topology>
    </subcellularLocation>
</comment>
<comment type="RNA editing">
    <location>
        <position position="1" evidence="1"/>
    </location>
    <text evidence="1">The initiator methionine is created by RNA editing.</text>
</comment>
<comment type="similarity">
    <text evidence="2">Belongs to the PsbL family.</text>
</comment>
<proteinExistence type="inferred from homology"/>
<feature type="chain" id="PRO_0000219684" description="Photosystem II reaction center protein L">
    <location>
        <begin position="1"/>
        <end position="38"/>
    </location>
</feature>
<feature type="transmembrane region" description="Helical" evidence="2">
    <location>
        <begin position="17"/>
        <end position="37"/>
    </location>
</feature>
<name>PSBL_BETVU</name>
<sequence>MTQSNPNEQNVELNRTSLYWGLLLIFVLAVLFSNYFFN</sequence>
<protein>
    <recommendedName>
        <fullName evidence="2">Photosystem II reaction center protein L</fullName>
        <shortName evidence="2">PSII-L</shortName>
    </recommendedName>
</protein>